<gene>
    <name evidence="1" type="primary">trmFO</name>
    <name type="ordered locus">SPP_0950</name>
</gene>
<sequence length="444" mass="49300">MSQSYINVIGAGLAGSEAAYQIAERGIPVKLYEMRGVKSTPQHKTDNFAELVCSNSLRGDALTNAVGLLKEEMRRLGSVILESAEATRVPAGGALAVDRDGFSQMVTEKVVNHPLIEVVRDEITELPTDVITVVATGPLTSDALAEKIHALNNGDGFYFYDAAAPIIDVNTIDMSKVYLKSRYDKGEAAYLNAPMTKQEFMDFHEALVNAEEAPLNSFEKEKYFEGCMPIEVMAKRGIKTMLYGPMKPVGLEYPDDYTGPRDGEFKTPYAVVQLRQDNAAGSLYNIVGFQTHLKWGEQKRVFQMIPGLENAEFVRYGVMHRNSYMDSPNLLEQTYRSKKQPNLFFAGQMTGVEGYVESAASGLVAGINAARLFKEESEVIFPETTAIGSLAHYITHADSKHFQPMNVNFGIIKELEGERIRDKKARYEKIAERALADLEEFLTV</sequence>
<accession>C1CK27</accession>
<name>TRMFO_STRZP</name>
<proteinExistence type="inferred from homology"/>
<evidence type="ECO:0000255" key="1">
    <source>
        <dbReference type="HAMAP-Rule" id="MF_01037"/>
    </source>
</evidence>
<dbReference type="EC" id="2.1.1.74" evidence="1"/>
<dbReference type="EMBL" id="CP000920">
    <property type="protein sequence ID" value="ACO20241.1"/>
    <property type="molecule type" value="Genomic_DNA"/>
</dbReference>
<dbReference type="RefSeq" id="WP_000083731.1">
    <property type="nucleotide sequence ID" value="NC_012467.1"/>
</dbReference>
<dbReference type="SMR" id="C1CK27"/>
<dbReference type="GeneID" id="45653713"/>
<dbReference type="KEGG" id="spp:SPP_0950"/>
<dbReference type="HOGENOM" id="CLU_033057_1_0_9"/>
<dbReference type="GO" id="GO:0005829">
    <property type="term" value="C:cytosol"/>
    <property type="evidence" value="ECO:0007669"/>
    <property type="project" value="TreeGrafter"/>
</dbReference>
<dbReference type="GO" id="GO:0050660">
    <property type="term" value="F:flavin adenine dinucleotide binding"/>
    <property type="evidence" value="ECO:0007669"/>
    <property type="project" value="UniProtKB-UniRule"/>
</dbReference>
<dbReference type="GO" id="GO:0047151">
    <property type="term" value="F:tRNA (uracil(54)-C5)-methyltransferase activity, 5,10-methylenetetrahydrofolate-dependent"/>
    <property type="evidence" value="ECO:0007669"/>
    <property type="project" value="UniProtKB-UniRule"/>
</dbReference>
<dbReference type="GO" id="GO:0030488">
    <property type="term" value="P:tRNA methylation"/>
    <property type="evidence" value="ECO:0007669"/>
    <property type="project" value="TreeGrafter"/>
</dbReference>
<dbReference type="GO" id="GO:0002098">
    <property type="term" value="P:tRNA wobble uridine modification"/>
    <property type="evidence" value="ECO:0007669"/>
    <property type="project" value="TreeGrafter"/>
</dbReference>
<dbReference type="FunFam" id="3.50.50.60:FF:000035">
    <property type="entry name" value="Methylenetetrahydrofolate--tRNA-(uracil-5-)-methyltransferase TrmFO"/>
    <property type="match status" value="1"/>
</dbReference>
<dbReference type="FunFam" id="3.50.50.60:FF:000040">
    <property type="entry name" value="Methylenetetrahydrofolate--tRNA-(uracil-5-)-methyltransferase TrmFO"/>
    <property type="match status" value="1"/>
</dbReference>
<dbReference type="Gene3D" id="3.50.50.60">
    <property type="entry name" value="FAD/NAD(P)-binding domain"/>
    <property type="match status" value="2"/>
</dbReference>
<dbReference type="HAMAP" id="MF_01037">
    <property type="entry name" value="TrmFO"/>
    <property type="match status" value="1"/>
</dbReference>
<dbReference type="InterPro" id="IPR036188">
    <property type="entry name" value="FAD/NAD-bd_sf"/>
</dbReference>
<dbReference type="InterPro" id="IPR002218">
    <property type="entry name" value="MnmG-rel"/>
</dbReference>
<dbReference type="InterPro" id="IPR020595">
    <property type="entry name" value="MnmG-rel_CS"/>
</dbReference>
<dbReference type="InterPro" id="IPR040131">
    <property type="entry name" value="MnmG_N"/>
</dbReference>
<dbReference type="InterPro" id="IPR004417">
    <property type="entry name" value="TrmFO"/>
</dbReference>
<dbReference type="NCBIfam" id="TIGR00137">
    <property type="entry name" value="gid_trmFO"/>
    <property type="match status" value="1"/>
</dbReference>
<dbReference type="NCBIfam" id="NF003739">
    <property type="entry name" value="PRK05335.1"/>
    <property type="match status" value="1"/>
</dbReference>
<dbReference type="PANTHER" id="PTHR11806">
    <property type="entry name" value="GLUCOSE INHIBITED DIVISION PROTEIN A"/>
    <property type="match status" value="1"/>
</dbReference>
<dbReference type="PANTHER" id="PTHR11806:SF2">
    <property type="entry name" value="METHYLENETETRAHYDROFOLATE--TRNA-(URACIL-5-)-METHYLTRANSFERASE TRMFO"/>
    <property type="match status" value="1"/>
</dbReference>
<dbReference type="Pfam" id="PF01134">
    <property type="entry name" value="GIDA"/>
    <property type="match status" value="1"/>
</dbReference>
<dbReference type="SUPFAM" id="SSF51905">
    <property type="entry name" value="FAD/NAD(P)-binding domain"/>
    <property type="match status" value="1"/>
</dbReference>
<dbReference type="PROSITE" id="PS01281">
    <property type="entry name" value="GIDA_2"/>
    <property type="match status" value="1"/>
</dbReference>
<comment type="function">
    <text evidence="1">Catalyzes the folate-dependent formation of 5-methyl-uridine at position 54 (M-5-U54) in all tRNAs.</text>
</comment>
<comment type="catalytic activity">
    <reaction evidence="1">
        <text>uridine(54) in tRNA + (6R)-5,10-methylene-5,6,7,8-tetrahydrofolate + NADH + H(+) = 5-methyluridine(54) in tRNA + (6S)-5,6,7,8-tetrahydrofolate + NAD(+)</text>
        <dbReference type="Rhea" id="RHEA:16873"/>
        <dbReference type="Rhea" id="RHEA-COMP:10167"/>
        <dbReference type="Rhea" id="RHEA-COMP:10193"/>
        <dbReference type="ChEBI" id="CHEBI:15378"/>
        <dbReference type="ChEBI" id="CHEBI:15636"/>
        <dbReference type="ChEBI" id="CHEBI:57453"/>
        <dbReference type="ChEBI" id="CHEBI:57540"/>
        <dbReference type="ChEBI" id="CHEBI:57945"/>
        <dbReference type="ChEBI" id="CHEBI:65315"/>
        <dbReference type="ChEBI" id="CHEBI:74447"/>
        <dbReference type="EC" id="2.1.1.74"/>
    </reaction>
</comment>
<comment type="catalytic activity">
    <reaction evidence="1">
        <text>uridine(54) in tRNA + (6R)-5,10-methylene-5,6,7,8-tetrahydrofolate + NADPH + H(+) = 5-methyluridine(54) in tRNA + (6S)-5,6,7,8-tetrahydrofolate + NADP(+)</text>
        <dbReference type="Rhea" id="RHEA:62372"/>
        <dbReference type="Rhea" id="RHEA-COMP:10167"/>
        <dbReference type="Rhea" id="RHEA-COMP:10193"/>
        <dbReference type="ChEBI" id="CHEBI:15378"/>
        <dbReference type="ChEBI" id="CHEBI:15636"/>
        <dbReference type="ChEBI" id="CHEBI:57453"/>
        <dbReference type="ChEBI" id="CHEBI:57783"/>
        <dbReference type="ChEBI" id="CHEBI:58349"/>
        <dbReference type="ChEBI" id="CHEBI:65315"/>
        <dbReference type="ChEBI" id="CHEBI:74447"/>
        <dbReference type="EC" id="2.1.1.74"/>
    </reaction>
</comment>
<comment type="cofactor">
    <cofactor evidence="1">
        <name>FAD</name>
        <dbReference type="ChEBI" id="CHEBI:57692"/>
    </cofactor>
</comment>
<comment type="subcellular location">
    <subcellularLocation>
        <location evidence="1">Cytoplasm</location>
    </subcellularLocation>
</comment>
<comment type="similarity">
    <text evidence="1">Belongs to the MnmG family. TrmFO subfamily.</text>
</comment>
<keyword id="KW-0963">Cytoplasm</keyword>
<keyword id="KW-0274">FAD</keyword>
<keyword id="KW-0285">Flavoprotein</keyword>
<keyword id="KW-0489">Methyltransferase</keyword>
<keyword id="KW-0520">NAD</keyword>
<keyword id="KW-0521">NADP</keyword>
<keyword id="KW-0808">Transferase</keyword>
<keyword id="KW-0819">tRNA processing</keyword>
<protein>
    <recommendedName>
        <fullName evidence="1">Methylenetetrahydrofolate--tRNA-(uracil-5-)-methyltransferase TrmFO</fullName>
        <ecNumber evidence="1">2.1.1.74</ecNumber>
    </recommendedName>
    <alternativeName>
        <fullName evidence="1">Folate-dependent tRNA (uracil-5-)-methyltransferase</fullName>
    </alternativeName>
    <alternativeName>
        <fullName evidence="1">Folate-dependent tRNA(M-5-U54)-methyltransferase</fullName>
    </alternativeName>
</protein>
<reference key="1">
    <citation type="journal article" date="2010" name="Genome Biol.">
        <title>Structure and dynamics of the pan-genome of Streptococcus pneumoniae and closely related species.</title>
        <authorList>
            <person name="Donati C."/>
            <person name="Hiller N.L."/>
            <person name="Tettelin H."/>
            <person name="Muzzi A."/>
            <person name="Croucher N.J."/>
            <person name="Angiuoli S.V."/>
            <person name="Oggioni M."/>
            <person name="Dunning Hotopp J.C."/>
            <person name="Hu F.Z."/>
            <person name="Riley D.R."/>
            <person name="Covacci A."/>
            <person name="Mitchell T.J."/>
            <person name="Bentley S.D."/>
            <person name="Kilian M."/>
            <person name="Ehrlich G.D."/>
            <person name="Rappuoli R."/>
            <person name="Moxon E.R."/>
            <person name="Masignani V."/>
        </authorList>
    </citation>
    <scope>NUCLEOTIDE SEQUENCE [LARGE SCALE GENOMIC DNA]</scope>
    <source>
        <strain>P1031</strain>
    </source>
</reference>
<organism>
    <name type="scientific">Streptococcus pneumoniae (strain P1031)</name>
    <dbReference type="NCBI Taxonomy" id="488223"/>
    <lineage>
        <taxon>Bacteria</taxon>
        <taxon>Bacillati</taxon>
        <taxon>Bacillota</taxon>
        <taxon>Bacilli</taxon>
        <taxon>Lactobacillales</taxon>
        <taxon>Streptococcaceae</taxon>
        <taxon>Streptococcus</taxon>
    </lineage>
</organism>
<feature type="chain" id="PRO_1000149481" description="Methylenetetrahydrofolate--tRNA-(uracil-5-)-methyltransferase TrmFO">
    <location>
        <begin position="1"/>
        <end position="444"/>
    </location>
</feature>
<feature type="binding site" evidence="1">
    <location>
        <begin position="10"/>
        <end position="15"/>
    </location>
    <ligand>
        <name>FAD</name>
        <dbReference type="ChEBI" id="CHEBI:57692"/>
    </ligand>
</feature>